<accession>C4ZUF6</accession>
<dbReference type="EMBL" id="CP001396">
    <property type="protein sequence ID" value="ACR61851.1"/>
    <property type="molecule type" value="Genomic_DNA"/>
</dbReference>
<dbReference type="RefSeq" id="WP_001238914.1">
    <property type="nucleotide sequence ID" value="NC_012759.1"/>
</dbReference>
<dbReference type="SMR" id="C4ZUF6"/>
<dbReference type="KEGG" id="ebw:BWG_2992"/>
<dbReference type="HOGENOM" id="CLU_055188_4_2_6"/>
<dbReference type="GO" id="GO:0022625">
    <property type="term" value="C:cytosolic large ribosomal subunit"/>
    <property type="evidence" value="ECO:0007669"/>
    <property type="project" value="TreeGrafter"/>
</dbReference>
<dbReference type="GO" id="GO:0019843">
    <property type="term" value="F:rRNA binding"/>
    <property type="evidence" value="ECO:0007669"/>
    <property type="project" value="UniProtKB-UniRule"/>
</dbReference>
<dbReference type="GO" id="GO:0003735">
    <property type="term" value="F:structural constituent of ribosome"/>
    <property type="evidence" value="ECO:0007669"/>
    <property type="project" value="InterPro"/>
</dbReference>
<dbReference type="GO" id="GO:0006412">
    <property type="term" value="P:translation"/>
    <property type="evidence" value="ECO:0007669"/>
    <property type="project" value="UniProtKB-UniRule"/>
</dbReference>
<dbReference type="FunFam" id="3.100.10.10:FF:000003">
    <property type="entry name" value="50S ribosomal protein L15"/>
    <property type="match status" value="1"/>
</dbReference>
<dbReference type="Gene3D" id="3.100.10.10">
    <property type="match status" value="1"/>
</dbReference>
<dbReference type="HAMAP" id="MF_01341">
    <property type="entry name" value="Ribosomal_uL15"/>
    <property type="match status" value="1"/>
</dbReference>
<dbReference type="InterPro" id="IPR030878">
    <property type="entry name" value="Ribosomal_uL15"/>
</dbReference>
<dbReference type="InterPro" id="IPR021131">
    <property type="entry name" value="Ribosomal_uL15/eL18"/>
</dbReference>
<dbReference type="InterPro" id="IPR036227">
    <property type="entry name" value="Ribosomal_uL15/eL18_sf"/>
</dbReference>
<dbReference type="InterPro" id="IPR005749">
    <property type="entry name" value="Ribosomal_uL15_bac-type"/>
</dbReference>
<dbReference type="InterPro" id="IPR001196">
    <property type="entry name" value="Ribosomal_uL15_CS"/>
</dbReference>
<dbReference type="NCBIfam" id="TIGR01071">
    <property type="entry name" value="rplO_bact"/>
    <property type="match status" value="1"/>
</dbReference>
<dbReference type="PANTHER" id="PTHR12934">
    <property type="entry name" value="50S RIBOSOMAL PROTEIN L15"/>
    <property type="match status" value="1"/>
</dbReference>
<dbReference type="PANTHER" id="PTHR12934:SF11">
    <property type="entry name" value="LARGE RIBOSOMAL SUBUNIT PROTEIN UL15M"/>
    <property type="match status" value="1"/>
</dbReference>
<dbReference type="Pfam" id="PF00828">
    <property type="entry name" value="Ribosomal_L27A"/>
    <property type="match status" value="1"/>
</dbReference>
<dbReference type="SUPFAM" id="SSF52080">
    <property type="entry name" value="Ribosomal proteins L15p and L18e"/>
    <property type="match status" value="1"/>
</dbReference>
<dbReference type="PROSITE" id="PS00475">
    <property type="entry name" value="RIBOSOMAL_L15"/>
    <property type="match status" value="1"/>
</dbReference>
<comment type="function">
    <text evidence="1">Binds to the 23S rRNA.</text>
</comment>
<comment type="subunit">
    <text evidence="1">Part of the 50S ribosomal subunit.</text>
</comment>
<comment type="similarity">
    <text evidence="1">Belongs to the universal ribosomal protein uL15 family.</text>
</comment>
<gene>
    <name evidence="1" type="primary">rplO</name>
    <name type="ordered locus">BWG_2992</name>
</gene>
<feature type="chain" id="PRO_1000214702" description="Large ribosomal subunit protein uL15">
    <location>
        <begin position="1"/>
        <end position="144"/>
    </location>
</feature>
<feature type="region of interest" description="Disordered" evidence="2">
    <location>
        <begin position="1"/>
        <end position="54"/>
    </location>
</feature>
<feature type="compositionally biased region" description="Gly residues" evidence="2">
    <location>
        <begin position="21"/>
        <end position="31"/>
    </location>
</feature>
<protein>
    <recommendedName>
        <fullName evidence="1">Large ribosomal subunit protein uL15</fullName>
    </recommendedName>
    <alternativeName>
        <fullName evidence="3">50S ribosomal protein L15</fullName>
    </alternativeName>
</protein>
<keyword id="KW-0687">Ribonucleoprotein</keyword>
<keyword id="KW-0689">Ribosomal protein</keyword>
<keyword id="KW-0694">RNA-binding</keyword>
<keyword id="KW-0699">rRNA-binding</keyword>
<reference key="1">
    <citation type="journal article" date="2009" name="J. Bacteriol.">
        <title>Genomic sequencing reveals regulatory mutations and recombinational events in the widely used MC4100 lineage of Escherichia coli K-12.</title>
        <authorList>
            <person name="Ferenci T."/>
            <person name="Zhou Z."/>
            <person name="Betteridge T."/>
            <person name="Ren Y."/>
            <person name="Liu Y."/>
            <person name="Feng L."/>
            <person name="Reeves P.R."/>
            <person name="Wang L."/>
        </authorList>
    </citation>
    <scope>NUCLEOTIDE SEQUENCE [LARGE SCALE GENOMIC DNA]</scope>
    <source>
        <strain>K12 / MC4100 / BW2952</strain>
    </source>
</reference>
<organism>
    <name type="scientific">Escherichia coli (strain K12 / MC4100 / BW2952)</name>
    <dbReference type="NCBI Taxonomy" id="595496"/>
    <lineage>
        <taxon>Bacteria</taxon>
        <taxon>Pseudomonadati</taxon>
        <taxon>Pseudomonadota</taxon>
        <taxon>Gammaproteobacteria</taxon>
        <taxon>Enterobacterales</taxon>
        <taxon>Enterobacteriaceae</taxon>
        <taxon>Escherichia</taxon>
    </lineage>
</organism>
<sequence length="144" mass="14980">MRLNTLSPAEGSKKAGKRLGRGIGSGLGKTGGRGHKGQKSRSGGGVRRGFEGGQMPLYRRLPKFGFTSRKAAITAEIRLSDLAKVEGGVVDLNTLKAANIIGIQIEFAKVILAGEVTTPVTVRGLRVTKGARAAIEAAGGKIEE</sequence>
<name>RL15_ECOBW</name>
<proteinExistence type="inferred from homology"/>
<evidence type="ECO:0000255" key="1">
    <source>
        <dbReference type="HAMAP-Rule" id="MF_01341"/>
    </source>
</evidence>
<evidence type="ECO:0000256" key="2">
    <source>
        <dbReference type="SAM" id="MobiDB-lite"/>
    </source>
</evidence>
<evidence type="ECO:0000305" key="3"/>